<comment type="function">
    <text evidence="1">Two distinct, membrane-bound, FAD-containing enzymes are responsible for the catalysis of fumarate and succinate interconversion; fumarate reductase is used in anaerobic growth, and succinate dehydrogenase is used in aerobic growth. Anchors the catalytic components of the fumarate reductase complex to the cell inner membrane, binds quinones.</text>
</comment>
<comment type="subunit">
    <text evidence="1">Part of an enzyme complex containing four subunits: a flavoprotein (FrdA), an iron-sulfur protein (FrdB), and two hydrophobic anchor proteins (FrdC and FrdD).</text>
</comment>
<comment type="subcellular location">
    <subcellularLocation>
        <location evidence="1">Cell inner membrane</location>
        <topology evidence="1">Multi-pass membrane protein</topology>
    </subcellularLocation>
</comment>
<comment type="similarity">
    <text evidence="1">Belongs to the FrdC family.</text>
</comment>
<organism>
    <name type="scientific">Escherichia coli O17:K52:H18 (strain UMN026 / ExPEC)</name>
    <dbReference type="NCBI Taxonomy" id="585056"/>
    <lineage>
        <taxon>Bacteria</taxon>
        <taxon>Pseudomonadati</taxon>
        <taxon>Pseudomonadota</taxon>
        <taxon>Gammaproteobacteria</taxon>
        <taxon>Enterobacterales</taxon>
        <taxon>Enterobacteriaceae</taxon>
        <taxon>Escherichia</taxon>
    </lineage>
</organism>
<proteinExistence type="inferred from homology"/>
<dbReference type="EMBL" id="CU928163">
    <property type="protein sequence ID" value="CAR15803.1"/>
    <property type="molecule type" value="Genomic_DNA"/>
</dbReference>
<dbReference type="RefSeq" id="WP_000208763.1">
    <property type="nucleotide sequence ID" value="NC_011751.1"/>
</dbReference>
<dbReference type="RefSeq" id="YP_002415287.1">
    <property type="nucleotide sequence ID" value="NC_011751.1"/>
</dbReference>
<dbReference type="SMR" id="B7NG91"/>
<dbReference type="STRING" id="585056.ECUMN_4688"/>
<dbReference type="KEGG" id="eum:ECUMN_4688"/>
<dbReference type="PATRIC" id="fig|585056.7.peg.4853"/>
<dbReference type="HOGENOM" id="CLU_156492_0_0_6"/>
<dbReference type="Proteomes" id="UP000007097">
    <property type="component" value="Chromosome"/>
</dbReference>
<dbReference type="GO" id="GO:0045283">
    <property type="term" value="C:fumarate reductase complex"/>
    <property type="evidence" value="ECO:0007669"/>
    <property type="project" value="UniProtKB-UniRule"/>
</dbReference>
<dbReference type="GO" id="GO:0005886">
    <property type="term" value="C:plasma membrane"/>
    <property type="evidence" value="ECO:0007669"/>
    <property type="project" value="UniProtKB-SubCell"/>
</dbReference>
<dbReference type="GO" id="GO:0000104">
    <property type="term" value="F:succinate dehydrogenase activity"/>
    <property type="evidence" value="ECO:0007669"/>
    <property type="project" value="UniProtKB-UniRule"/>
</dbReference>
<dbReference type="CDD" id="cd00546">
    <property type="entry name" value="QFR_TypeD_subunitC"/>
    <property type="match status" value="1"/>
</dbReference>
<dbReference type="FunFam" id="1.20.1300.10:FF:000003">
    <property type="entry name" value="Fumarate reductase subunit C"/>
    <property type="match status" value="1"/>
</dbReference>
<dbReference type="Gene3D" id="1.20.1300.10">
    <property type="entry name" value="Fumarate reductase/succinate dehydrogenase, transmembrane subunit"/>
    <property type="match status" value="1"/>
</dbReference>
<dbReference type="HAMAP" id="MF_00708">
    <property type="entry name" value="Fumarate_red_C"/>
    <property type="match status" value="1"/>
</dbReference>
<dbReference type="InterPro" id="IPR003510">
    <property type="entry name" value="Fumarate_red_C"/>
</dbReference>
<dbReference type="InterPro" id="IPR034804">
    <property type="entry name" value="SQR/QFR_C/D"/>
</dbReference>
<dbReference type="NCBIfam" id="NF003445">
    <property type="entry name" value="PRK04987.1"/>
    <property type="match status" value="1"/>
</dbReference>
<dbReference type="Pfam" id="PF02300">
    <property type="entry name" value="Fumarate_red_C"/>
    <property type="match status" value="1"/>
</dbReference>
<dbReference type="PIRSF" id="PIRSF000180">
    <property type="entry name" value="FrdC"/>
    <property type="match status" value="1"/>
</dbReference>
<dbReference type="SUPFAM" id="SSF81343">
    <property type="entry name" value="Fumarate reductase respiratory complex transmembrane subunits"/>
    <property type="match status" value="1"/>
</dbReference>
<feature type="chain" id="PRO_1000132374" description="Fumarate reductase subunit C">
    <location>
        <begin position="1"/>
        <end position="131"/>
    </location>
</feature>
<feature type="transmembrane region" description="Helical" evidence="1">
    <location>
        <begin position="30"/>
        <end position="50"/>
    </location>
</feature>
<feature type="transmembrane region" description="Helical" evidence="1">
    <location>
        <begin position="63"/>
        <end position="83"/>
    </location>
</feature>
<feature type="transmembrane region" description="Helical" evidence="1">
    <location>
        <begin position="109"/>
        <end position="129"/>
    </location>
</feature>
<protein>
    <recommendedName>
        <fullName evidence="1">Fumarate reductase subunit C</fullName>
    </recommendedName>
    <alternativeName>
        <fullName evidence="1">Fumarate reductase 15 kDa hydrophobic protein</fullName>
    </alternativeName>
    <alternativeName>
        <fullName evidence="1">Quinol-fumarate reductase subunit C</fullName>
        <shortName evidence="1">QFR subunit C</shortName>
    </alternativeName>
</protein>
<gene>
    <name evidence="1" type="primary">frdC</name>
    <name type="ordered locus">ECUMN_4688</name>
</gene>
<evidence type="ECO:0000255" key="1">
    <source>
        <dbReference type="HAMAP-Rule" id="MF_00708"/>
    </source>
</evidence>
<name>FRDC_ECOLU</name>
<reference key="1">
    <citation type="journal article" date="2009" name="PLoS Genet.">
        <title>Organised genome dynamics in the Escherichia coli species results in highly diverse adaptive paths.</title>
        <authorList>
            <person name="Touchon M."/>
            <person name="Hoede C."/>
            <person name="Tenaillon O."/>
            <person name="Barbe V."/>
            <person name="Baeriswyl S."/>
            <person name="Bidet P."/>
            <person name="Bingen E."/>
            <person name="Bonacorsi S."/>
            <person name="Bouchier C."/>
            <person name="Bouvet O."/>
            <person name="Calteau A."/>
            <person name="Chiapello H."/>
            <person name="Clermont O."/>
            <person name="Cruveiller S."/>
            <person name="Danchin A."/>
            <person name="Diard M."/>
            <person name="Dossat C."/>
            <person name="Karoui M.E."/>
            <person name="Frapy E."/>
            <person name="Garry L."/>
            <person name="Ghigo J.M."/>
            <person name="Gilles A.M."/>
            <person name="Johnson J."/>
            <person name="Le Bouguenec C."/>
            <person name="Lescat M."/>
            <person name="Mangenot S."/>
            <person name="Martinez-Jehanne V."/>
            <person name="Matic I."/>
            <person name="Nassif X."/>
            <person name="Oztas S."/>
            <person name="Petit M.A."/>
            <person name="Pichon C."/>
            <person name="Rouy Z."/>
            <person name="Ruf C.S."/>
            <person name="Schneider D."/>
            <person name="Tourret J."/>
            <person name="Vacherie B."/>
            <person name="Vallenet D."/>
            <person name="Medigue C."/>
            <person name="Rocha E.P.C."/>
            <person name="Denamur E."/>
        </authorList>
    </citation>
    <scope>NUCLEOTIDE SEQUENCE [LARGE SCALE GENOMIC DNA]</scope>
    <source>
        <strain>UMN026 / ExPEC</strain>
    </source>
</reference>
<accession>B7NG91</accession>
<keyword id="KW-0997">Cell inner membrane</keyword>
<keyword id="KW-1003">Cell membrane</keyword>
<keyword id="KW-0472">Membrane</keyword>
<keyword id="KW-0812">Transmembrane</keyword>
<keyword id="KW-1133">Transmembrane helix</keyword>
<sequence length="131" mass="15031">MTTKRKPYVRPMTSTWWKKLPFYRFYMLREGTAVPAVWFSIELIFGLFALKNGPESWAGFVDFLQNPVIVIINLITLAAALLHTKTWFELAPKAANIIVKDEKMGPEPIIKSLWAVTVVATIVILFVALYW</sequence>